<organism>
    <name type="scientific">Danio rerio</name>
    <name type="common">Zebrafish</name>
    <name type="synonym">Brachydanio rerio</name>
    <dbReference type="NCBI Taxonomy" id="7955"/>
    <lineage>
        <taxon>Eukaryota</taxon>
        <taxon>Metazoa</taxon>
        <taxon>Chordata</taxon>
        <taxon>Craniata</taxon>
        <taxon>Vertebrata</taxon>
        <taxon>Euteleostomi</taxon>
        <taxon>Actinopterygii</taxon>
        <taxon>Neopterygii</taxon>
        <taxon>Teleostei</taxon>
        <taxon>Ostariophysi</taxon>
        <taxon>Cypriniformes</taxon>
        <taxon>Danionidae</taxon>
        <taxon>Danioninae</taxon>
        <taxon>Danio</taxon>
    </lineage>
</organism>
<evidence type="ECO:0000255" key="1"/>
<evidence type="ECO:0000256" key="2">
    <source>
        <dbReference type="SAM" id="MobiDB-lite"/>
    </source>
</evidence>
<evidence type="ECO:0000305" key="3"/>
<keyword id="KW-0067">ATP-binding</keyword>
<keyword id="KW-0547">Nucleotide-binding</keyword>
<keyword id="KW-1185">Reference proteome</keyword>
<protein>
    <recommendedName>
        <fullName>Lactation elevated protein 1 homolog B</fullName>
    </recommendedName>
</protein>
<gene>
    <name type="primary">lace1b</name>
    <name type="ORF">si:ch211-278n15.1</name>
</gene>
<accession>Q5TYS0</accession>
<accession>A4FUK5</accession>
<name>LCE1B_DANRE</name>
<dbReference type="EMBL" id="BX927123">
    <property type="protein sequence ID" value="CAH68958.1"/>
    <property type="molecule type" value="Genomic_DNA"/>
</dbReference>
<dbReference type="EMBL" id="BC115066">
    <property type="protein sequence ID" value="AAI15067.1"/>
    <property type="molecule type" value="mRNA"/>
</dbReference>
<dbReference type="RefSeq" id="NP_001020653.2">
    <property type="nucleotide sequence ID" value="NM_001025482.2"/>
</dbReference>
<dbReference type="FunCoup" id="Q5TYS0">
    <property type="interactions" value="1922"/>
</dbReference>
<dbReference type="STRING" id="7955.ENSDARP00000062977"/>
<dbReference type="PaxDb" id="7955-ENSDARP00000105122"/>
<dbReference type="Ensembl" id="ENSDART00000062978">
    <property type="protein sequence ID" value="ENSDARP00000062977"/>
    <property type="gene ID" value="ENSDARG00000042902"/>
</dbReference>
<dbReference type="GeneID" id="555926"/>
<dbReference type="KEGG" id="dre:555926"/>
<dbReference type="AGR" id="ZFIN:ZDB-GENE-041014-178"/>
<dbReference type="CTD" id="555926"/>
<dbReference type="ZFIN" id="ZDB-GENE-041014-178">
    <property type="gene designation" value="afg1lb"/>
</dbReference>
<dbReference type="eggNOG" id="KOG2383">
    <property type="taxonomic scope" value="Eukaryota"/>
</dbReference>
<dbReference type="HOGENOM" id="CLU_008681_3_1_1"/>
<dbReference type="InParanoid" id="Q5TYS0"/>
<dbReference type="OMA" id="ECYDRRV"/>
<dbReference type="OrthoDB" id="548867at2759"/>
<dbReference type="PhylomeDB" id="Q5TYS0"/>
<dbReference type="PRO" id="PR:Q5TYS0"/>
<dbReference type="Proteomes" id="UP000000437">
    <property type="component" value="Chromosome 20"/>
</dbReference>
<dbReference type="Bgee" id="ENSDARG00000042902">
    <property type="expression patterns" value="Expressed in tail and 20 other cell types or tissues"/>
</dbReference>
<dbReference type="ExpressionAtlas" id="Q5TYS0">
    <property type="expression patterns" value="baseline"/>
</dbReference>
<dbReference type="GO" id="GO:0005737">
    <property type="term" value="C:cytoplasm"/>
    <property type="evidence" value="ECO:0000314"/>
    <property type="project" value="ZFIN"/>
</dbReference>
<dbReference type="GO" id="GO:0005739">
    <property type="term" value="C:mitochondrion"/>
    <property type="evidence" value="ECO:0000318"/>
    <property type="project" value="GO_Central"/>
</dbReference>
<dbReference type="GO" id="GO:0005634">
    <property type="term" value="C:nucleus"/>
    <property type="evidence" value="ECO:0000314"/>
    <property type="project" value="ZFIN"/>
</dbReference>
<dbReference type="GO" id="GO:0005524">
    <property type="term" value="F:ATP binding"/>
    <property type="evidence" value="ECO:0007669"/>
    <property type="project" value="UniProtKB-KW"/>
</dbReference>
<dbReference type="GO" id="GO:0016887">
    <property type="term" value="F:ATP hydrolysis activity"/>
    <property type="evidence" value="ECO:0000318"/>
    <property type="project" value="GO_Central"/>
</dbReference>
<dbReference type="GO" id="GO:0003341">
    <property type="term" value="P:cilium movement"/>
    <property type="evidence" value="ECO:0000315"/>
    <property type="project" value="ZFIN"/>
</dbReference>
<dbReference type="FunFam" id="3.40.50.300:FF:000735">
    <property type="entry name" value="Lactation elevated 1 (Predicted)"/>
    <property type="match status" value="1"/>
</dbReference>
<dbReference type="Gene3D" id="3.40.50.300">
    <property type="entry name" value="P-loop containing nucleotide triphosphate hydrolases"/>
    <property type="match status" value="1"/>
</dbReference>
<dbReference type="InterPro" id="IPR005654">
    <property type="entry name" value="ATPase_AFG1-like"/>
</dbReference>
<dbReference type="InterPro" id="IPR027417">
    <property type="entry name" value="P-loop_NTPase"/>
</dbReference>
<dbReference type="NCBIfam" id="NF040713">
    <property type="entry name" value="ZapE"/>
    <property type="match status" value="1"/>
</dbReference>
<dbReference type="PANTHER" id="PTHR12169">
    <property type="entry name" value="ATPASE N2B"/>
    <property type="match status" value="1"/>
</dbReference>
<dbReference type="PANTHER" id="PTHR12169:SF19">
    <property type="entry name" value="LACTATION ELEVATED PROTEIN 1 HOMOLOG B-RELATED"/>
    <property type="match status" value="1"/>
</dbReference>
<dbReference type="Pfam" id="PF03969">
    <property type="entry name" value="AFG1_ATPase"/>
    <property type="match status" value="1"/>
</dbReference>
<dbReference type="SUPFAM" id="SSF52540">
    <property type="entry name" value="P-loop containing nucleoside triphosphate hydrolases"/>
    <property type="match status" value="1"/>
</dbReference>
<proteinExistence type="evidence at transcript level"/>
<feature type="chain" id="PRO_0000279524" description="Lactation elevated protein 1 homolog B">
    <location>
        <begin position="1"/>
        <end position="503"/>
    </location>
</feature>
<feature type="region of interest" description="Disordered" evidence="2">
    <location>
        <begin position="108"/>
        <end position="155"/>
    </location>
</feature>
<feature type="compositionally biased region" description="Basic and acidic residues" evidence="2">
    <location>
        <begin position="130"/>
        <end position="148"/>
    </location>
</feature>
<feature type="binding site" evidence="1">
    <location>
        <begin position="159"/>
        <end position="166"/>
    </location>
    <ligand>
        <name>ATP</name>
        <dbReference type="ChEBI" id="CHEBI:30616"/>
    </ligand>
</feature>
<feature type="sequence conflict" description="In Ref. 2; AAI15067." evidence="3" ref="2">
    <original>F</original>
    <variation>S</variation>
    <location>
        <position position="68"/>
    </location>
</feature>
<feature type="sequence conflict" description="In Ref. 2; AAI15067." evidence="3" ref="2">
    <original>R</original>
    <variation>Q</variation>
    <location>
        <position position="72"/>
    </location>
</feature>
<feature type="sequence conflict" description="In Ref. 2; AAI15067." evidence="3" ref="2">
    <original>D</original>
    <variation>E</variation>
    <location>
        <position position="192"/>
    </location>
</feature>
<feature type="sequence conflict" description="In Ref. 2; AAI15067." evidence="3" ref="2">
    <original>I</original>
    <variation>N</variation>
    <location>
        <position position="296"/>
    </location>
</feature>
<feature type="sequence conflict" description="In Ref. 2; AAI15067." evidence="3" ref="2">
    <original>F</original>
    <variation>Y</variation>
    <location>
        <position position="305"/>
    </location>
</feature>
<feature type="sequence conflict" description="In Ref. 2; AAI15067." evidence="3" ref="2">
    <original>I</original>
    <variation>M</variation>
    <location>
        <position position="467"/>
    </location>
</feature>
<sequence length="503" mass="57601">MAAYASRWRTDCLLRLVFKKTRLSKQVCCEVCKASRGCSTTSTGHTSTSAPWPVYGRLVTHYDSLVHFGSLRKDPQQRTALLQLEELTRVLTDYTNIPILLPQPKDCLQNQPTSELQDKVGSRETVNICRPDENVSNEKEDQQEESSKPHPPQGYYIYGNVGTGKTMLMDLFYSFVENRRKKRVHFNGFMLDVHRRIHKLKQSLPKRRIGKMTMYDPIFPVAMEIAEETCLICFDEFQVVDIADAMILKQLFEGLFKCGVVVVATSNRPPEELYKNGLQRAAFVPFIGVLKEYCRIVSLDTGIDFRTREMKPAGRLYYISSEPDAENAVNALFEELAFRQNDVTRPRVLNVQGREVTLSRTCGTIADCSFQELCEQPLGAGDYLEIARCFDTVIIRNVPYLQLGMKDQARRFTTLIDNFYDQKVRVVMLADAPLDRLLDQGQMTGEEARDRLMLDELGLTDEASKRITLFTADEEIFAFQRTVSRLAEMQTEQYWISGDRSQS</sequence>
<comment type="similarity">
    <text evidence="3">Belongs to the AFG1 ATPase family.</text>
</comment>
<reference key="1">
    <citation type="journal article" date="2013" name="Nature">
        <title>The zebrafish reference genome sequence and its relationship to the human genome.</title>
        <authorList>
            <person name="Howe K."/>
            <person name="Clark M.D."/>
            <person name="Torroja C.F."/>
            <person name="Torrance J."/>
            <person name="Berthelot C."/>
            <person name="Muffato M."/>
            <person name="Collins J.E."/>
            <person name="Humphray S."/>
            <person name="McLaren K."/>
            <person name="Matthews L."/>
            <person name="McLaren S."/>
            <person name="Sealy I."/>
            <person name="Caccamo M."/>
            <person name="Churcher C."/>
            <person name="Scott C."/>
            <person name="Barrett J.C."/>
            <person name="Koch R."/>
            <person name="Rauch G.J."/>
            <person name="White S."/>
            <person name="Chow W."/>
            <person name="Kilian B."/>
            <person name="Quintais L.T."/>
            <person name="Guerra-Assuncao J.A."/>
            <person name="Zhou Y."/>
            <person name="Gu Y."/>
            <person name="Yen J."/>
            <person name="Vogel J.H."/>
            <person name="Eyre T."/>
            <person name="Redmond S."/>
            <person name="Banerjee R."/>
            <person name="Chi J."/>
            <person name="Fu B."/>
            <person name="Langley E."/>
            <person name="Maguire S.F."/>
            <person name="Laird G.K."/>
            <person name="Lloyd D."/>
            <person name="Kenyon E."/>
            <person name="Donaldson S."/>
            <person name="Sehra H."/>
            <person name="Almeida-King J."/>
            <person name="Loveland J."/>
            <person name="Trevanion S."/>
            <person name="Jones M."/>
            <person name="Quail M."/>
            <person name="Willey D."/>
            <person name="Hunt A."/>
            <person name="Burton J."/>
            <person name="Sims S."/>
            <person name="McLay K."/>
            <person name="Plumb B."/>
            <person name="Davis J."/>
            <person name="Clee C."/>
            <person name="Oliver K."/>
            <person name="Clark R."/>
            <person name="Riddle C."/>
            <person name="Elliot D."/>
            <person name="Threadgold G."/>
            <person name="Harden G."/>
            <person name="Ware D."/>
            <person name="Begum S."/>
            <person name="Mortimore B."/>
            <person name="Kerry G."/>
            <person name="Heath P."/>
            <person name="Phillimore B."/>
            <person name="Tracey A."/>
            <person name="Corby N."/>
            <person name="Dunn M."/>
            <person name="Johnson C."/>
            <person name="Wood J."/>
            <person name="Clark S."/>
            <person name="Pelan S."/>
            <person name="Griffiths G."/>
            <person name="Smith M."/>
            <person name="Glithero R."/>
            <person name="Howden P."/>
            <person name="Barker N."/>
            <person name="Lloyd C."/>
            <person name="Stevens C."/>
            <person name="Harley J."/>
            <person name="Holt K."/>
            <person name="Panagiotidis G."/>
            <person name="Lovell J."/>
            <person name="Beasley H."/>
            <person name="Henderson C."/>
            <person name="Gordon D."/>
            <person name="Auger K."/>
            <person name="Wright D."/>
            <person name="Collins J."/>
            <person name="Raisen C."/>
            <person name="Dyer L."/>
            <person name="Leung K."/>
            <person name="Robertson L."/>
            <person name="Ambridge K."/>
            <person name="Leongamornlert D."/>
            <person name="McGuire S."/>
            <person name="Gilderthorp R."/>
            <person name="Griffiths C."/>
            <person name="Manthravadi D."/>
            <person name="Nichol S."/>
            <person name="Barker G."/>
            <person name="Whitehead S."/>
            <person name="Kay M."/>
            <person name="Brown J."/>
            <person name="Murnane C."/>
            <person name="Gray E."/>
            <person name="Humphries M."/>
            <person name="Sycamore N."/>
            <person name="Barker D."/>
            <person name="Saunders D."/>
            <person name="Wallis J."/>
            <person name="Babbage A."/>
            <person name="Hammond S."/>
            <person name="Mashreghi-Mohammadi M."/>
            <person name="Barr L."/>
            <person name="Martin S."/>
            <person name="Wray P."/>
            <person name="Ellington A."/>
            <person name="Matthews N."/>
            <person name="Ellwood M."/>
            <person name="Woodmansey R."/>
            <person name="Clark G."/>
            <person name="Cooper J."/>
            <person name="Tromans A."/>
            <person name="Grafham D."/>
            <person name="Skuce C."/>
            <person name="Pandian R."/>
            <person name="Andrews R."/>
            <person name="Harrison E."/>
            <person name="Kimberley A."/>
            <person name="Garnett J."/>
            <person name="Fosker N."/>
            <person name="Hall R."/>
            <person name="Garner P."/>
            <person name="Kelly D."/>
            <person name="Bird C."/>
            <person name="Palmer S."/>
            <person name="Gehring I."/>
            <person name="Berger A."/>
            <person name="Dooley C.M."/>
            <person name="Ersan-Urun Z."/>
            <person name="Eser C."/>
            <person name="Geiger H."/>
            <person name="Geisler M."/>
            <person name="Karotki L."/>
            <person name="Kirn A."/>
            <person name="Konantz J."/>
            <person name="Konantz M."/>
            <person name="Oberlander M."/>
            <person name="Rudolph-Geiger S."/>
            <person name="Teucke M."/>
            <person name="Lanz C."/>
            <person name="Raddatz G."/>
            <person name="Osoegawa K."/>
            <person name="Zhu B."/>
            <person name="Rapp A."/>
            <person name="Widaa S."/>
            <person name="Langford C."/>
            <person name="Yang F."/>
            <person name="Schuster S.C."/>
            <person name="Carter N.P."/>
            <person name="Harrow J."/>
            <person name="Ning Z."/>
            <person name="Herrero J."/>
            <person name="Searle S.M."/>
            <person name="Enright A."/>
            <person name="Geisler R."/>
            <person name="Plasterk R.H."/>
            <person name="Lee C."/>
            <person name="Westerfield M."/>
            <person name="de Jong P.J."/>
            <person name="Zon L.I."/>
            <person name="Postlethwait J.H."/>
            <person name="Nusslein-Volhard C."/>
            <person name="Hubbard T.J."/>
            <person name="Roest Crollius H."/>
            <person name="Rogers J."/>
            <person name="Stemple D.L."/>
        </authorList>
    </citation>
    <scope>NUCLEOTIDE SEQUENCE [LARGE SCALE GENOMIC DNA]</scope>
    <source>
        <strain>Tuebingen</strain>
    </source>
</reference>
<reference key="2">
    <citation type="submission" date="2006-04" db="EMBL/GenBank/DDBJ databases">
        <authorList>
            <consortium name="NIH - Zebrafish Gene Collection (ZGC) project"/>
        </authorList>
    </citation>
    <scope>NUCLEOTIDE SEQUENCE [LARGE SCALE MRNA]</scope>
    <source>
        <tissue>Ovary</tissue>
    </source>
</reference>